<evidence type="ECO:0000255" key="1">
    <source>
        <dbReference type="HAMAP-Rule" id="MF_01202"/>
    </source>
</evidence>
<sequence>MQITILGSGVIGVTTAYYLAKLGHEVTVIDREEGPALETSFANAGQVSPGYASPWAAPGIPLKAAKWLFQKHAPLILRLTTDPVQYRWLLQMLANCTDSRYKINKTRMVRVAEYSRDCLIELRKDTGIEYDQRSQGTLQLFREQYQLDGIGKDIEVLRQDGVPFEVLDRDGCVNVEPALAHAKDKFVGGLRLPNDETGDCFKFTNALAKIAEGLGVKFRFGVNIKSLLMSGGKISGVETSEGIVTAERYVVALGSYTPALIKALGLNAPIYPVKGYSITAPIVDESRAPVSTVLDESYKIAITRLGDRIRVGGMAEVSGFTDDLPAARRATLDLSVTDLFPGGDLKAATFWSGLRPMTPDSTPIIGGTRYDNLFINAGHGTLGWTMACGSGRLLADLISGNKADIRADDLGIARYN</sequence>
<dbReference type="EC" id="1.4.99.-" evidence="1"/>
<dbReference type="EMBL" id="CP000709">
    <property type="protein sequence ID" value="ABQ62278.1"/>
    <property type="molecule type" value="Genomic_DNA"/>
</dbReference>
<dbReference type="RefSeq" id="WP_002965723.1">
    <property type="nucleotide sequence ID" value="NC_009504.1"/>
</dbReference>
<dbReference type="SMR" id="A5VVJ0"/>
<dbReference type="KEGG" id="bov:BOV_A0866"/>
<dbReference type="HOGENOM" id="CLU_007884_9_2_5"/>
<dbReference type="PhylomeDB" id="A5VVJ0"/>
<dbReference type="UniPathway" id="UPA00043">
    <property type="reaction ID" value="UER00498"/>
</dbReference>
<dbReference type="Proteomes" id="UP000006383">
    <property type="component" value="Chromosome II"/>
</dbReference>
<dbReference type="GO" id="GO:0005737">
    <property type="term" value="C:cytoplasm"/>
    <property type="evidence" value="ECO:0007669"/>
    <property type="project" value="TreeGrafter"/>
</dbReference>
<dbReference type="GO" id="GO:0005886">
    <property type="term" value="C:plasma membrane"/>
    <property type="evidence" value="ECO:0007669"/>
    <property type="project" value="TreeGrafter"/>
</dbReference>
<dbReference type="GO" id="GO:0008718">
    <property type="term" value="F:D-amino-acid dehydrogenase activity"/>
    <property type="evidence" value="ECO:0007669"/>
    <property type="project" value="UniProtKB-UniRule"/>
</dbReference>
<dbReference type="GO" id="GO:0055130">
    <property type="term" value="P:D-alanine catabolic process"/>
    <property type="evidence" value="ECO:0007669"/>
    <property type="project" value="UniProtKB-UniPathway"/>
</dbReference>
<dbReference type="FunFam" id="3.50.50.60:FF:000020">
    <property type="entry name" value="D-amino acid dehydrogenase"/>
    <property type="match status" value="1"/>
</dbReference>
<dbReference type="Gene3D" id="3.30.9.10">
    <property type="entry name" value="D-Amino Acid Oxidase, subunit A, domain 2"/>
    <property type="match status" value="1"/>
</dbReference>
<dbReference type="Gene3D" id="3.50.50.60">
    <property type="entry name" value="FAD/NAD(P)-binding domain"/>
    <property type="match status" value="2"/>
</dbReference>
<dbReference type="HAMAP" id="MF_01202">
    <property type="entry name" value="DadA"/>
    <property type="match status" value="1"/>
</dbReference>
<dbReference type="InterPro" id="IPR023080">
    <property type="entry name" value="DadA"/>
</dbReference>
<dbReference type="InterPro" id="IPR006076">
    <property type="entry name" value="FAD-dep_OxRdtase"/>
</dbReference>
<dbReference type="InterPro" id="IPR036188">
    <property type="entry name" value="FAD/NAD-bd_sf"/>
</dbReference>
<dbReference type="NCBIfam" id="NF001933">
    <property type="entry name" value="PRK00711.1"/>
    <property type="match status" value="1"/>
</dbReference>
<dbReference type="PANTHER" id="PTHR13847:SF280">
    <property type="entry name" value="D-AMINO ACID DEHYDROGENASE"/>
    <property type="match status" value="1"/>
</dbReference>
<dbReference type="PANTHER" id="PTHR13847">
    <property type="entry name" value="SARCOSINE DEHYDROGENASE-RELATED"/>
    <property type="match status" value="1"/>
</dbReference>
<dbReference type="Pfam" id="PF01266">
    <property type="entry name" value="DAO"/>
    <property type="match status" value="1"/>
</dbReference>
<dbReference type="SUPFAM" id="SSF54373">
    <property type="entry name" value="FAD-linked reductases, C-terminal domain"/>
    <property type="match status" value="1"/>
</dbReference>
<dbReference type="SUPFAM" id="SSF51905">
    <property type="entry name" value="FAD/NAD(P)-binding domain"/>
    <property type="match status" value="1"/>
</dbReference>
<organism>
    <name type="scientific">Brucella ovis (strain ATCC 25840 / 63/290 / NCTC 10512)</name>
    <dbReference type="NCBI Taxonomy" id="444178"/>
    <lineage>
        <taxon>Bacteria</taxon>
        <taxon>Pseudomonadati</taxon>
        <taxon>Pseudomonadota</taxon>
        <taxon>Alphaproteobacteria</taxon>
        <taxon>Hyphomicrobiales</taxon>
        <taxon>Brucellaceae</taxon>
        <taxon>Brucella/Ochrobactrum group</taxon>
        <taxon>Brucella</taxon>
    </lineage>
</organism>
<proteinExistence type="inferred from homology"/>
<protein>
    <recommendedName>
        <fullName evidence="1">D-amino acid dehydrogenase</fullName>
        <ecNumber evidence="1">1.4.99.-</ecNumber>
    </recommendedName>
</protein>
<gene>
    <name evidence="1" type="primary">dadA</name>
    <name type="ordered locus">BOV_A0866</name>
</gene>
<feature type="chain" id="PRO_1000066071" description="D-amino acid dehydrogenase">
    <location>
        <begin position="1"/>
        <end position="416"/>
    </location>
</feature>
<feature type="binding site" evidence="1">
    <location>
        <begin position="3"/>
        <end position="17"/>
    </location>
    <ligand>
        <name>FAD</name>
        <dbReference type="ChEBI" id="CHEBI:57692"/>
    </ligand>
</feature>
<accession>A5VVJ0</accession>
<reference key="1">
    <citation type="journal article" date="2009" name="PLoS ONE">
        <title>Genome degradation in Brucella ovis corresponds with narrowing of its host range and tissue tropism.</title>
        <authorList>
            <person name="Tsolis R.M."/>
            <person name="Seshadri R."/>
            <person name="Santos R.L."/>
            <person name="Sangari F.J."/>
            <person name="Lobo J.M."/>
            <person name="de Jong M.F."/>
            <person name="Ren Q."/>
            <person name="Myers G."/>
            <person name="Brinkac L.M."/>
            <person name="Nelson W.C."/>
            <person name="Deboy R.T."/>
            <person name="Angiuoli S."/>
            <person name="Khouri H."/>
            <person name="Dimitrov G."/>
            <person name="Robinson J.R."/>
            <person name="Mulligan S."/>
            <person name="Walker R.L."/>
            <person name="Elzer P.E."/>
            <person name="Hassan K.A."/>
            <person name="Paulsen I.T."/>
        </authorList>
    </citation>
    <scope>NUCLEOTIDE SEQUENCE [LARGE SCALE GENOMIC DNA]</scope>
    <source>
        <strain>ATCC 25840 / 63/290 / NCTC 10512</strain>
    </source>
</reference>
<name>DADA_BRUO2</name>
<comment type="function">
    <text evidence="1">Oxidative deamination of D-amino acids.</text>
</comment>
<comment type="catalytic activity">
    <reaction evidence="1">
        <text>a D-alpha-amino acid + A + H2O = a 2-oxocarboxylate + AH2 + NH4(+)</text>
        <dbReference type="Rhea" id="RHEA:18125"/>
        <dbReference type="ChEBI" id="CHEBI:13193"/>
        <dbReference type="ChEBI" id="CHEBI:15377"/>
        <dbReference type="ChEBI" id="CHEBI:17499"/>
        <dbReference type="ChEBI" id="CHEBI:28938"/>
        <dbReference type="ChEBI" id="CHEBI:35179"/>
        <dbReference type="ChEBI" id="CHEBI:59871"/>
    </reaction>
</comment>
<comment type="cofactor">
    <cofactor evidence="1">
        <name>FAD</name>
        <dbReference type="ChEBI" id="CHEBI:57692"/>
    </cofactor>
</comment>
<comment type="pathway">
    <text>Amino-acid degradation; D-alanine degradation; NH(3) and pyruvate from D-alanine: step 1/1.</text>
</comment>
<comment type="similarity">
    <text evidence="1">Belongs to the DadA oxidoreductase family.</text>
</comment>
<keyword id="KW-0274">FAD</keyword>
<keyword id="KW-0285">Flavoprotein</keyword>
<keyword id="KW-0560">Oxidoreductase</keyword>